<name>TANC1_HUMAN</name>
<evidence type="ECO:0000250" key="1"/>
<evidence type="ECO:0000250" key="2">
    <source>
        <dbReference type="UniProtKB" id="Q0VGY8"/>
    </source>
</evidence>
<evidence type="ECO:0000250" key="3">
    <source>
        <dbReference type="UniProtKB" id="Q6F6B3"/>
    </source>
</evidence>
<evidence type="ECO:0000256" key="4">
    <source>
        <dbReference type="SAM" id="MobiDB-lite"/>
    </source>
</evidence>
<evidence type="ECO:0000269" key="5">
    <source>
    </source>
</evidence>
<evidence type="ECO:0000269" key="6">
    <source>
    </source>
</evidence>
<evidence type="ECO:0000269" key="7">
    <source>
    </source>
</evidence>
<evidence type="ECO:0000303" key="8">
    <source>
    </source>
</evidence>
<evidence type="ECO:0000305" key="9"/>
<evidence type="ECO:0007744" key="10">
    <source>
    </source>
</evidence>
<evidence type="ECO:0007744" key="11">
    <source>
    </source>
</evidence>
<evidence type="ECO:0007744" key="12">
    <source>
    </source>
</evidence>
<protein>
    <recommendedName>
        <fullName>Protein TANC1</fullName>
    </recommendedName>
    <alternativeName>
        <fullName>Tetratricopeptide repeat, ankyrin repeat and coiled-coil domain-containing protein 1</fullName>
    </alternativeName>
</protein>
<proteinExistence type="evidence at protein level"/>
<organism>
    <name type="scientific">Homo sapiens</name>
    <name type="common">Human</name>
    <dbReference type="NCBI Taxonomy" id="9606"/>
    <lineage>
        <taxon>Eukaryota</taxon>
        <taxon>Metazoa</taxon>
        <taxon>Chordata</taxon>
        <taxon>Craniata</taxon>
        <taxon>Vertebrata</taxon>
        <taxon>Euteleostomi</taxon>
        <taxon>Mammalia</taxon>
        <taxon>Eutheria</taxon>
        <taxon>Euarchontoglires</taxon>
        <taxon>Primates</taxon>
        <taxon>Haplorrhini</taxon>
        <taxon>Catarrhini</taxon>
        <taxon>Hominidae</taxon>
        <taxon>Homo</taxon>
    </lineage>
</organism>
<dbReference type="EMBL" id="AC009307">
    <property type="status" value="NOT_ANNOTATED_CDS"/>
    <property type="molecule type" value="Genomic_DNA"/>
</dbReference>
<dbReference type="EMBL" id="AC010093">
    <property type="status" value="NOT_ANNOTATED_CDS"/>
    <property type="molecule type" value="Genomic_DNA"/>
</dbReference>
<dbReference type="EMBL" id="BC037329">
    <property type="protein sequence ID" value="AAH37329.1"/>
    <property type="status" value="ALT_SEQ"/>
    <property type="molecule type" value="mRNA"/>
</dbReference>
<dbReference type="EMBL" id="AB051515">
    <property type="protein sequence ID" value="BAB21819.1"/>
    <property type="molecule type" value="mRNA"/>
</dbReference>
<dbReference type="CCDS" id="CCDS42766.1">
    <molecule id="Q9C0D5-1"/>
</dbReference>
<dbReference type="RefSeq" id="NP_001139381.1">
    <property type="nucleotide sequence ID" value="NM_001145909.1"/>
</dbReference>
<dbReference type="RefSeq" id="NP_203752.2">
    <molecule id="Q9C0D5-1"/>
    <property type="nucleotide sequence ID" value="NM_033394.3"/>
</dbReference>
<dbReference type="RefSeq" id="XP_006712873.1">
    <molecule id="Q9C0D5-1"/>
    <property type="nucleotide sequence ID" value="XM_006712810.4"/>
</dbReference>
<dbReference type="RefSeq" id="XP_011510360.1">
    <property type="nucleotide sequence ID" value="XM_011512058.2"/>
</dbReference>
<dbReference type="RefSeq" id="XP_047302087.1">
    <molecule id="Q9C0D5-2"/>
    <property type="nucleotide sequence ID" value="XM_047446131.1"/>
</dbReference>
<dbReference type="SMR" id="Q9C0D5"/>
<dbReference type="BioGRID" id="124545">
    <property type="interactions" value="105"/>
</dbReference>
<dbReference type="FunCoup" id="Q9C0D5">
    <property type="interactions" value="213"/>
</dbReference>
<dbReference type="IntAct" id="Q9C0D5">
    <property type="interactions" value="35"/>
</dbReference>
<dbReference type="MINT" id="Q9C0D5"/>
<dbReference type="STRING" id="9606.ENSP00000263635"/>
<dbReference type="GlyCosmos" id="Q9C0D5">
    <property type="glycosylation" value="3 sites, 1 glycan"/>
</dbReference>
<dbReference type="GlyGen" id="Q9C0D5">
    <property type="glycosylation" value="16 sites, 1 O-linked glycan (13 sites)"/>
</dbReference>
<dbReference type="iPTMnet" id="Q9C0D5"/>
<dbReference type="MetOSite" id="Q9C0D5"/>
<dbReference type="PhosphoSitePlus" id="Q9C0D5"/>
<dbReference type="SwissPalm" id="Q9C0D5"/>
<dbReference type="BioMuta" id="TANC1"/>
<dbReference type="DMDM" id="296452941"/>
<dbReference type="jPOST" id="Q9C0D5"/>
<dbReference type="MassIVE" id="Q9C0D5"/>
<dbReference type="PaxDb" id="9606-ENSP00000263635"/>
<dbReference type="PeptideAtlas" id="Q9C0D5"/>
<dbReference type="ProteomicsDB" id="80014">
    <molecule id="Q9C0D5-1"/>
</dbReference>
<dbReference type="ProteomicsDB" id="80015">
    <molecule id="Q9C0D5-2"/>
</dbReference>
<dbReference type="Pumba" id="Q9C0D5"/>
<dbReference type="Antibodypedia" id="47958">
    <property type="antibodies" value="39 antibodies from 9 providers"/>
</dbReference>
<dbReference type="DNASU" id="85461"/>
<dbReference type="Ensembl" id="ENST00000263635.8">
    <molecule id="Q9C0D5-1"/>
    <property type="protein sequence ID" value="ENSP00000263635.6"/>
    <property type="gene ID" value="ENSG00000115183.15"/>
</dbReference>
<dbReference type="GeneID" id="85461"/>
<dbReference type="KEGG" id="hsa:85461"/>
<dbReference type="MANE-Select" id="ENST00000263635.8">
    <property type="protein sequence ID" value="ENSP00000263635.6"/>
    <property type="RefSeq nucleotide sequence ID" value="NM_033394.3"/>
    <property type="RefSeq protein sequence ID" value="NP_203752.2"/>
</dbReference>
<dbReference type="UCSC" id="uc002uag.4">
    <molecule id="Q9C0D5-1"/>
    <property type="organism name" value="human"/>
</dbReference>
<dbReference type="AGR" id="HGNC:29364"/>
<dbReference type="CTD" id="85461"/>
<dbReference type="DisGeNET" id="85461"/>
<dbReference type="GeneCards" id="TANC1"/>
<dbReference type="HGNC" id="HGNC:29364">
    <property type="gene designation" value="TANC1"/>
</dbReference>
<dbReference type="HPA" id="ENSG00000115183">
    <property type="expression patterns" value="Low tissue specificity"/>
</dbReference>
<dbReference type="MIM" id="611397">
    <property type="type" value="gene"/>
</dbReference>
<dbReference type="neXtProt" id="NX_Q9C0D5"/>
<dbReference type="OpenTargets" id="ENSG00000115183"/>
<dbReference type="PharmGKB" id="PA142670838"/>
<dbReference type="VEuPathDB" id="HostDB:ENSG00000115183"/>
<dbReference type="eggNOG" id="KOG0504">
    <property type="taxonomic scope" value="Eukaryota"/>
</dbReference>
<dbReference type="GeneTree" id="ENSGT00940000155655"/>
<dbReference type="HOGENOM" id="CLU_001464_0_1_1"/>
<dbReference type="InParanoid" id="Q9C0D5"/>
<dbReference type="OMA" id="QGPDARM"/>
<dbReference type="OrthoDB" id="5958958at2759"/>
<dbReference type="PAN-GO" id="Q9C0D5">
    <property type="GO annotations" value="2 GO annotations based on evolutionary models"/>
</dbReference>
<dbReference type="PhylomeDB" id="Q9C0D5"/>
<dbReference type="TreeFam" id="TF323159"/>
<dbReference type="PathwayCommons" id="Q9C0D5"/>
<dbReference type="SignaLink" id="Q9C0D5"/>
<dbReference type="SIGNOR" id="Q9C0D5"/>
<dbReference type="BioGRID-ORCS" id="85461">
    <property type="hits" value="6 hits in 1146 CRISPR screens"/>
</dbReference>
<dbReference type="ChiTaRS" id="TANC1">
    <property type="organism name" value="human"/>
</dbReference>
<dbReference type="GenomeRNAi" id="85461"/>
<dbReference type="Pharos" id="Q9C0D5">
    <property type="development level" value="Tdark"/>
</dbReference>
<dbReference type="PRO" id="PR:Q9C0D5"/>
<dbReference type="Proteomes" id="UP000005640">
    <property type="component" value="Chromosome 2"/>
</dbReference>
<dbReference type="RNAct" id="Q9C0D5">
    <property type="molecule type" value="protein"/>
</dbReference>
<dbReference type="Bgee" id="ENSG00000115183">
    <property type="expression patterns" value="Expressed in upper arm skin and 187 other cell types or tissues"/>
</dbReference>
<dbReference type="GO" id="GO:0043679">
    <property type="term" value="C:axon terminus"/>
    <property type="evidence" value="ECO:0007669"/>
    <property type="project" value="Ensembl"/>
</dbReference>
<dbReference type="GO" id="GO:0030425">
    <property type="term" value="C:dendrite"/>
    <property type="evidence" value="ECO:0007669"/>
    <property type="project" value="Ensembl"/>
</dbReference>
<dbReference type="GO" id="GO:0098978">
    <property type="term" value="C:glutamatergic synapse"/>
    <property type="evidence" value="ECO:0000318"/>
    <property type="project" value="GO_Central"/>
</dbReference>
<dbReference type="GO" id="GO:0043025">
    <property type="term" value="C:neuronal cell body"/>
    <property type="evidence" value="ECO:0007669"/>
    <property type="project" value="Ensembl"/>
</dbReference>
<dbReference type="GO" id="GO:0014069">
    <property type="term" value="C:postsynaptic density"/>
    <property type="evidence" value="ECO:0007669"/>
    <property type="project" value="UniProtKB-SubCell"/>
</dbReference>
<dbReference type="GO" id="GO:0097062">
    <property type="term" value="P:dendritic spine maintenance"/>
    <property type="evidence" value="ECO:0007669"/>
    <property type="project" value="Ensembl"/>
</dbReference>
<dbReference type="GO" id="GO:0007520">
    <property type="term" value="P:myoblast fusion"/>
    <property type="evidence" value="ECO:0007669"/>
    <property type="project" value="Ensembl"/>
</dbReference>
<dbReference type="GO" id="GO:0099175">
    <property type="term" value="P:regulation of postsynapse organization"/>
    <property type="evidence" value="ECO:0000318"/>
    <property type="project" value="GO_Central"/>
</dbReference>
<dbReference type="GO" id="GO:0008542">
    <property type="term" value="P:visual learning"/>
    <property type="evidence" value="ECO:0007669"/>
    <property type="project" value="Ensembl"/>
</dbReference>
<dbReference type="FunFam" id="1.25.40.20:FF:000022">
    <property type="entry name" value="protein TANC2 isoform X1"/>
    <property type="match status" value="1"/>
</dbReference>
<dbReference type="FunFam" id="1.25.40.20:FF:000036">
    <property type="entry name" value="protein TANC2 isoform X2"/>
    <property type="match status" value="1"/>
</dbReference>
<dbReference type="FunFam" id="1.25.40.10:FF:000044">
    <property type="entry name" value="Tetratricopeptide repeat, ankyrin repeat and coiled-coil containing 1"/>
    <property type="match status" value="1"/>
</dbReference>
<dbReference type="Gene3D" id="1.25.40.20">
    <property type="entry name" value="Ankyrin repeat-containing domain"/>
    <property type="match status" value="3"/>
</dbReference>
<dbReference type="Gene3D" id="1.25.40.10">
    <property type="entry name" value="Tetratricopeptide repeat domain"/>
    <property type="match status" value="1"/>
</dbReference>
<dbReference type="InterPro" id="IPR002110">
    <property type="entry name" value="Ankyrin_rpt"/>
</dbReference>
<dbReference type="InterPro" id="IPR036770">
    <property type="entry name" value="Ankyrin_rpt-contain_sf"/>
</dbReference>
<dbReference type="InterPro" id="IPR050889">
    <property type="entry name" value="Dendritic_Spine_Reg/Scaffold"/>
</dbReference>
<dbReference type="InterPro" id="IPR011990">
    <property type="entry name" value="TPR-like_helical_dom_sf"/>
</dbReference>
<dbReference type="InterPro" id="IPR019734">
    <property type="entry name" value="TPR_rpt"/>
</dbReference>
<dbReference type="PANTHER" id="PTHR24166:SF23">
    <property type="entry name" value="PROTEIN TANC1"/>
    <property type="match status" value="1"/>
</dbReference>
<dbReference type="PANTHER" id="PTHR24166">
    <property type="entry name" value="ROLLING PEBBLES, ISOFORM B"/>
    <property type="match status" value="1"/>
</dbReference>
<dbReference type="Pfam" id="PF00023">
    <property type="entry name" value="Ank"/>
    <property type="match status" value="1"/>
</dbReference>
<dbReference type="Pfam" id="PF12796">
    <property type="entry name" value="Ank_2"/>
    <property type="match status" value="3"/>
</dbReference>
<dbReference type="PRINTS" id="PR01415">
    <property type="entry name" value="ANKYRIN"/>
</dbReference>
<dbReference type="SMART" id="SM00248">
    <property type="entry name" value="ANK"/>
    <property type="match status" value="10"/>
</dbReference>
<dbReference type="SMART" id="SM00028">
    <property type="entry name" value="TPR"/>
    <property type="match status" value="3"/>
</dbReference>
<dbReference type="SUPFAM" id="SSF48403">
    <property type="entry name" value="Ankyrin repeat"/>
    <property type="match status" value="1"/>
</dbReference>
<dbReference type="SUPFAM" id="SSF48452">
    <property type="entry name" value="TPR-like"/>
    <property type="match status" value="1"/>
</dbReference>
<dbReference type="PROSITE" id="PS50297">
    <property type="entry name" value="ANK_REP_REGION"/>
    <property type="match status" value="1"/>
</dbReference>
<dbReference type="PROSITE" id="PS50088">
    <property type="entry name" value="ANK_REPEAT"/>
    <property type="match status" value="6"/>
</dbReference>
<dbReference type="PROSITE" id="PS50005">
    <property type="entry name" value="TPR"/>
    <property type="match status" value="3"/>
</dbReference>
<dbReference type="PROSITE" id="PS50293">
    <property type="entry name" value="TPR_REGION"/>
    <property type="match status" value="1"/>
</dbReference>
<gene>
    <name type="primary">TANC1</name>
    <name type="synonym">KIAA1728</name>
</gene>
<reference key="1">
    <citation type="journal article" date="2005" name="Nature">
        <title>Generation and annotation of the DNA sequences of human chromosomes 2 and 4.</title>
        <authorList>
            <person name="Hillier L.W."/>
            <person name="Graves T.A."/>
            <person name="Fulton R.S."/>
            <person name="Fulton L.A."/>
            <person name="Pepin K.H."/>
            <person name="Minx P."/>
            <person name="Wagner-McPherson C."/>
            <person name="Layman D."/>
            <person name="Wylie K."/>
            <person name="Sekhon M."/>
            <person name="Becker M.C."/>
            <person name="Fewell G.A."/>
            <person name="Delehaunty K.D."/>
            <person name="Miner T.L."/>
            <person name="Nash W.E."/>
            <person name="Kremitzki C."/>
            <person name="Oddy L."/>
            <person name="Du H."/>
            <person name="Sun H."/>
            <person name="Bradshaw-Cordum H."/>
            <person name="Ali J."/>
            <person name="Carter J."/>
            <person name="Cordes M."/>
            <person name="Harris A."/>
            <person name="Isak A."/>
            <person name="van Brunt A."/>
            <person name="Nguyen C."/>
            <person name="Du F."/>
            <person name="Courtney L."/>
            <person name="Kalicki J."/>
            <person name="Ozersky P."/>
            <person name="Abbott S."/>
            <person name="Armstrong J."/>
            <person name="Belter E.A."/>
            <person name="Caruso L."/>
            <person name="Cedroni M."/>
            <person name="Cotton M."/>
            <person name="Davidson T."/>
            <person name="Desai A."/>
            <person name="Elliott G."/>
            <person name="Erb T."/>
            <person name="Fronick C."/>
            <person name="Gaige T."/>
            <person name="Haakenson W."/>
            <person name="Haglund K."/>
            <person name="Holmes A."/>
            <person name="Harkins R."/>
            <person name="Kim K."/>
            <person name="Kruchowski S.S."/>
            <person name="Strong C.M."/>
            <person name="Grewal N."/>
            <person name="Goyea E."/>
            <person name="Hou S."/>
            <person name="Levy A."/>
            <person name="Martinka S."/>
            <person name="Mead K."/>
            <person name="McLellan M.D."/>
            <person name="Meyer R."/>
            <person name="Randall-Maher J."/>
            <person name="Tomlinson C."/>
            <person name="Dauphin-Kohlberg S."/>
            <person name="Kozlowicz-Reilly A."/>
            <person name="Shah N."/>
            <person name="Swearengen-Shahid S."/>
            <person name="Snider J."/>
            <person name="Strong J.T."/>
            <person name="Thompson J."/>
            <person name="Yoakum M."/>
            <person name="Leonard S."/>
            <person name="Pearman C."/>
            <person name="Trani L."/>
            <person name="Radionenko M."/>
            <person name="Waligorski J.E."/>
            <person name="Wang C."/>
            <person name="Rock S.M."/>
            <person name="Tin-Wollam A.-M."/>
            <person name="Maupin R."/>
            <person name="Latreille P."/>
            <person name="Wendl M.C."/>
            <person name="Yang S.-P."/>
            <person name="Pohl C."/>
            <person name="Wallis J.W."/>
            <person name="Spieth J."/>
            <person name="Bieri T.A."/>
            <person name="Berkowicz N."/>
            <person name="Nelson J.O."/>
            <person name="Osborne J."/>
            <person name="Ding L."/>
            <person name="Meyer R."/>
            <person name="Sabo A."/>
            <person name="Shotland Y."/>
            <person name="Sinha P."/>
            <person name="Wohldmann P.E."/>
            <person name="Cook L.L."/>
            <person name="Hickenbotham M.T."/>
            <person name="Eldred J."/>
            <person name="Williams D."/>
            <person name="Jones T.A."/>
            <person name="She X."/>
            <person name="Ciccarelli F.D."/>
            <person name="Izaurralde E."/>
            <person name="Taylor J."/>
            <person name="Schmutz J."/>
            <person name="Myers R.M."/>
            <person name="Cox D.R."/>
            <person name="Huang X."/>
            <person name="McPherson J.D."/>
            <person name="Mardis E.R."/>
            <person name="Clifton S.W."/>
            <person name="Warren W.C."/>
            <person name="Chinwalla A.T."/>
            <person name="Eddy S.R."/>
            <person name="Marra M.A."/>
            <person name="Ovcharenko I."/>
            <person name="Furey T.S."/>
            <person name="Miller W."/>
            <person name="Eichler E.E."/>
            <person name="Bork P."/>
            <person name="Suyama M."/>
            <person name="Torrents D."/>
            <person name="Waterston R.H."/>
            <person name="Wilson R.K."/>
        </authorList>
    </citation>
    <scope>NUCLEOTIDE SEQUENCE [LARGE SCALE GENOMIC DNA]</scope>
</reference>
<reference key="2">
    <citation type="journal article" date="2004" name="Genome Res.">
        <title>The status, quality, and expansion of the NIH full-length cDNA project: the Mammalian Gene Collection (MGC).</title>
        <authorList>
            <consortium name="The MGC Project Team"/>
        </authorList>
    </citation>
    <scope>NUCLEOTIDE SEQUENCE [LARGE SCALE MRNA] OF 1-662 (ISOFORM 2)</scope>
    <scope>VARIANT SER-251</scope>
    <source>
        <tissue>Brain</tissue>
    </source>
</reference>
<reference key="3">
    <citation type="journal article" date="2000" name="DNA Res.">
        <title>Prediction of the coding sequences of unidentified human genes. XIX. The complete sequences of 100 new cDNA clones from brain which code for large proteins in vitro.</title>
        <authorList>
            <person name="Nagase T."/>
            <person name="Kikuno R."/>
            <person name="Hattori A."/>
            <person name="Kondo Y."/>
            <person name="Okumura K."/>
            <person name="Ohara O."/>
        </authorList>
    </citation>
    <scope>NUCLEOTIDE SEQUENCE [LARGE SCALE MRNA] OF 218-1861 (ISOFORM 1)</scope>
    <scope>VARIANTS SER-251 AND ALA-1573</scope>
    <source>
        <tissue>Brain</tissue>
    </source>
</reference>
<reference key="4">
    <citation type="journal article" date="2008" name="Biochem. Biophys. Res. Commun.">
        <title>MINK is a Rap2 effector for phosphorylation of the postsynaptic scaffold protein TANC1.</title>
        <authorList>
            <person name="Nonaka H."/>
            <person name="Takei K."/>
            <person name="Umikawa M."/>
            <person name="Oshiro M."/>
            <person name="Kuninaka K."/>
            <person name="Bayarjargal M."/>
            <person name="Asato T."/>
            <person name="Yamashiro Y."/>
            <person name="Uechi Y."/>
            <person name="Endo S."/>
            <person name="Suzuki T."/>
            <person name="Kariya K."/>
        </authorList>
    </citation>
    <scope>INTERACTION WITH TNIK</scope>
    <scope>PHOSPHORYLATION</scope>
</reference>
<reference key="5">
    <citation type="journal article" date="2008" name="J. Proteome Res.">
        <title>Combining protein-based IMAC, peptide-based IMAC, and MudPIT for efficient phosphoproteomic analysis.</title>
        <authorList>
            <person name="Cantin G.T."/>
            <person name="Yi W."/>
            <person name="Lu B."/>
            <person name="Park S.K."/>
            <person name="Xu T."/>
            <person name="Lee J.-D."/>
            <person name="Yates J.R. III"/>
        </authorList>
    </citation>
    <scope>IDENTIFICATION BY MASS SPECTROMETRY [LARGE SCALE ANALYSIS]</scope>
    <source>
        <tissue>Cervix carcinoma</tissue>
    </source>
</reference>
<reference key="6">
    <citation type="journal article" date="2008" name="Proc. Natl. Acad. Sci. U.S.A.">
        <title>A quantitative atlas of mitotic phosphorylation.</title>
        <authorList>
            <person name="Dephoure N."/>
            <person name="Zhou C."/>
            <person name="Villen J."/>
            <person name="Beausoleil S.A."/>
            <person name="Bakalarski C.E."/>
            <person name="Elledge S.J."/>
            <person name="Gygi S.P."/>
        </authorList>
    </citation>
    <scope>PHOSPHORYLATION [LARGE SCALE ANALYSIS] AT SER-66 AND SER-207</scope>
    <scope>IDENTIFICATION BY MASS SPECTROMETRY [LARGE SCALE ANALYSIS]</scope>
    <source>
        <tissue>Cervix carcinoma</tissue>
    </source>
</reference>
<reference key="7">
    <citation type="journal article" date="2010" name="Sci. Signal.">
        <title>Quantitative phosphoproteomics reveals widespread full phosphorylation site occupancy during mitosis.</title>
        <authorList>
            <person name="Olsen J.V."/>
            <person name="Vermeulen M."/>
            <person name="Santamaria A."/>
            <person name="Kumar C."/>
            <person name="Miller M.L."/>
            <person name="Jensen L.J."/>
            <person name="Gnad F."/>
            <person name="Cox J."/>
            <person name="Jensen T.S."/>
            <person name="Nigg E.A."/>
            <person name="Brunak S."/>
            <person name="Mann M."/>
        </authorList>
    </citation>
    <scope>IDENTIFICATION BY MASS SPECTROMETRY [LARGE SCALE ANALYSIS]</scope>
    <source>
        <tissue>Cervix carcinoma</tissue>
    </source>
</reference>
<reference key="8">
    <citation type="journal article" date="2012" name="Proc. Natl. Acad. Sci. U.S.A.">
        <title>N-terminal acetylome analyses and functional insights of the N-terminal acetyltransferase NatB.</title>
        <authorList>
            <person name="Van Damme P."/>
            <person name="Lasa M."/>
            <person name="Polevoda B."/>
            <person name="Gazquez C."/>
            <person name="Elosegui-Artola A."/>
            <person name="Kim D.S."/>
            <person name="De Juan-Pardo E."/>
            <person name="Demeyer K."/>
            <person name="Hole K."/>
            <person name="Larrea E."/>
            <person name="Timmerman E."/>
            <person name="Prieto J."/>
            <person name="Arnesen T."/>
            <person name="Sherman F."/>
            <person name="Gevaert K."/>
            <person name="Aldabe R."/>
        </authorList>
    </citation>
    <scope>ACETYLATION [LARGE SCALE ANALYSIS] AT MET-1</scope>
    <scope>IDENTIFICATION BY MASS SPECTROMETRY [LARGE SCALE ANALYSIS]</scope>
</reference>
<reference key="9">
    <citation type="journal article" date="2013" name="J. Proteome Res.">
        <title>Toward a comprehensive characterization of a human cancer cell phosphoproteome.</title>
        <authorList>
            <person name="Zhou H."/>
            <person name="Di Palma S."/>
            <person name="Preisinger C."/>
            <person name="Peng M."/>
            <person name="Polat A.N."/>
            <person name="Heck A.J."/>
            <person name="Mohammed S."/>
        </authorList>
    </citation>
    <scope>PHOSPHORYLATION [LARGE SCALE ANALYSIS] AT SER-63; SER-67; SER-270; SER-465 AND SER-1668</scope>
    <scope>IDENTIFICATION BY MASS SPECTROMETRY [LARGE SCALE ANALYSIS]</scope>
    <source>
        <tissue>Cervix carcinoma</tissue>
    </source>
</reference>
<feature type="chain" id="PRO_0000316959" description="Protein TANC1">
    <location>
        <begin position="1"/>
        <end position="1861"/>
    </location>
</feature>
<feature type="repeat" description="ANK 1">
    <location>
        <begin position="896"/>
        <end position="928"/>
    </location>
</feature>
<feature type="repeat" description="ANK 2">
    <location>
        <begin position="934"/>
        <end position="963"/>
    </location>
</feature>
<feature type="repeat" description="ANK 3">
    <location>
        <begin position="967"/>
        <end position="996"/>
    </location>
</feature>
<feature type="repeat" description="ANK 4">
    <location>
        <begin position="1000"/>
        <end position="1029"/>
    </location>
</feature>
<feature type="repeat" description="ANK 5">
    <location>
        <begin position="1040"/>
        <end position="1069"/>
    </location>
</feature>
<feature type="repeat" description="ANK 6">
    <location>
        <begin position="1078"/>
        <end position="1107"/>
    </location>
</feature>
<feature type="repeat" description="ANK 7">
    <location>
        <begin position="1111"/>
        <end position="1140"/>
    </location>
</feature>
<feature type="repeat" description="ANK 8">
    <location>
        <begin position="1144"/>
        <end position="1173"/>
    </location>
</feature>
<feature type="repeat" description="ANK 9">
    <location>
        <begin position="1177"/>
        <end position="1206"/>
    </location>
</feature>
<feature type="repeat" description="ANK 10">
    <location>
        <begin position="1210"/>
        <end position="1239"/>
    </location>
</feature>
<feature type="repeat" description="ANK 11">
    <location>
        <begin position="1243"/>
        <end position="1272"/>
    </location>
</feature>
<feature type="repeat" description="TPR 1">
    <location>
        <begin position="1289"/>
        <end position="1322"/>
    </location>
</feature>
<feature type="repeat" description="TPR 2">
    <location>
        <begin position="1336"/>
        <end position="1369"/>
    </location>
</feature>
<feature type="repeat" description="TPR 3">
    <location>
        <begin position="1371"/>
        <end position="1403"/>
    </location>
</feature>
<feature type="region of interest" description="Disordered" evidence="4">
    <location>
        <begin position="1"/>
        <end position="46"/>
    </location>
</feature>
<feature type="region of interest" description="Disordered" evidence="4">
    <location>
        <begin position="63"/>
        <end position="99"/>
    </location>
</feature>
<feature type="region of interest" description="Disordered" evidence="4">
    <location>
        <begin position="206"/>
        <end position="225"/>
    </location>
</feature>
<feature type="region of interest" description="Disordered" evidence="4">
    <location>
        <begin position="257"/>
        <end position="311"/>
    </location>
</feature>
<feature type="region of interest" description="Disordered" evidence="4">
    <location>
        <begin position="439"/>
        <end position="486"/>
    </location>
</feature>
<feature type="region of interest" description="Disordered" evidence="4">
    <location>
        <begin position="1421"/>
        <end position="1485"/>
    </location>
</feature>
<feature type="region of interest" description="Disordered" evidence="4">
    <location>
        <begin position="1636"/>
        <end position="1696"/>
    </location>
</feature>
<feature type="compositionally biased region" description="Basic and acidic residues" evidence="4">
    <location>
        <begin position="8"/>
        <end position="21"/>
    </location>
</feature>
<feature type="compositionally biased region" description="Polar residues" evidence="4">
    <location>
        <begin position="206"/>
        <end position="219"/>
    </location>
</feature>
<feature type="compositionally biased region" description="Polar residues" evidence="4">
    <location>
        <begin position="440"/>
        <end position="455"/>
    </location>
</feature>
<feature type="compositionally biased region" description="Low complexity" evidence="4">
    <location>
        <begin position="461"/>
        <end position="480"/>
    </location>
</feature>
<feature type="compositionally biased region" description="Low complexity" evidence="4">
    <location>
        <begin position="1421"/>
        <end position="1431"/>
    </location>
</feature>
<feature type="compositionally biased region" description="Low complexity" evidence="4">
    <location>
        <begin position="1467"/>
        <end position="1485"/>
    </location>
</feature>
<feature type="compositionally biased region" description="Low complexity" evidence="4">
    <location>
        <begin position="1659"/>
        <end position="1689"/>
    </location>
</feature>
<feature type="modified residue" description="N-acetylmethionine" evidence="11">
    <location>
        <position position="1"/>
    </location>
</feature>
<feature type="modified residue" description="Phosphoserine" evidence="12">
    <location>
        <position position="63"/>
    </location>
</feature>
<feature type="modified residue" description="Phosphoserine" evidence="10">
    <location>
        <position position="66"/>
    </location>
</feature>
<feature type="modified residue" description="Phosphoserine" evidence="12">
    <location>
        <position position="67"/>
    </location>
</feature>
<feature type="modified residue" description="Phosphoserine" evidence="10">
    <location>
        <position position="207"/>
    </location>
</feature>
<feature type="modified residue" description="Phosphoserine" evidence="12">
    <location>
        <position position="270"/>
    </location>
</feature>
<feature type="modified residue" description="Phosphoserine" evidence="12">
    <location>
        <position position="465"/>
    </location>
</feature>
<feature type="modified residue" description="Phosphoserine" evidence="3">
    <location>
        <position position="1439"/>
    </location>
</feature>
<feature type="modified residue" description="Phosphoserine" evidence="12">
    <location>
        <position position="1668"/>
    </location>
</feature>
<feature type="modified residue" description="Phosphoserine" evidence="2">
    <location>
        <position position="1676"/>
    </location>
</feature>
<feature type="modified residue" description="Phosphoserine" evidence="2">
    <location>
        <position position="1677"/>
    </location>
</feature>
<feature type="splice variant" id="VSP_030828" description="In isoform 2." evidence="8">
    <location>
        <begin position="122"/>
        <end position="227"/>
    </location>
</feature>
<feature type="sequence variant" id="VAR_061022" description="In dbSNP:rs34588551.">
    <original>P</original>
    <variation>S</variation>
    <location>
        <position position="30"/>
    </location>
</feature>
<feature type="sequence variant" id="VAR_038435" description="In dbSNP:rs12466551." evidence="5 6">
    <original>N</original>
    <variation>S</variation>
    <location>
        <position position="251"/>
    </location>
</feature>
<feature type="sequence variant" id="VAR_038436" description="In dbSNP:rs13421084.">
    <original>G</original>
    <variation>S</variation>
    <location>
        <position position="1511"/>
    </location>
</feature>
<feature type="sequence variant" id="VAR_038437" description="In dbSNP:rs4664277." evidence="5">
    <original>T</original>
    <variation>A</variation>
    <location>
        <position position="1573"/>
    </location>
</feature>
<accession>Q9C0D5</accession>
<accession>C9JD88</accession>
<accession>Q49AI8</accession>
<sequence length="1861" mass="202219">MLKAVLKKSREGGKGGKKEAGSDFGPETSPVLHLDHSADSPVSSLPTAEDTYRVSLAKGVSMSLPSSPLLPRQSHLVQSRVNKKSPGPVRKPKYVESPRVPGDAVIMPFREVAKPTEPDEHEAKADNEPSCSPAAQELLTRLGFLLGEGIPSATHITIEDKNETMCTALSQGISPCSTLTSSTASPSTDSPCSTLNSCVSKTAANKSPCETISSPSSTLESKDSGIIATITSSSENDDRSGSSLEWNKDGNLRLGVQKGVLHDRRADNCSPVAEEETTGSAESTLPKAESSAGDGPVPYSQGSSSLIMPRPNSVAATSSTKLEDLSYLDGQRNAPLRTSIRLPWHNTAGGRAQEVKARFAPYKPQDILLKPLLFEVPSITTDSVFVGRDWLFHQIEENLRNTELAENRGAVVVGNVGFGKTAIISKLVALSCHGSRMRQIASNSPGSSPKTSDPTQDLHFTPLLSPSSSTSASSTAKTPLGSISAENQRPREDAVKYLASKVVAYHYCQADNTYTCLVPEFVHSIAALLCRSHQLAAYRDLLIKEPQLQSMLSLRSCVQDPVAAFKRGVLEPLTNLRNEQKIPEEEYIILIDGLNEAEFHKPDYGDTLSSFITKIISKFPAWLKLIVTVRANFQEIISALPFVKLSLDDFPDNKDIHSDLHAYVQHRVHSSQDILSNISLNGKADATLIGKVSSHLVLRSLGSYLYLKLTLDLFQRGHLVIKSASYKVVPVSLSELYLLQCNMKFMTQSAFERALPILNVALASLHPMTDEQIFQAINAGHIQGEQGWEDFQQRMDALSCFLIKRRDKTRMFCHPSFREWLVWRADGENTAFLCEPRNGHALLAFMFSRQEGKLNRQQTMELGHHILKAHIFKGLSKKTGISSSHLQALWIGYSTEGLSAALASLRNLYTPNVKVSRLLILGGANVNYRTEVLNNAPILCVQSHLGHEEVVTLLLEFGACLDGTSENGMTALCYAAAAGHMKLVCLLTKKGVRVDHLDKKGQCALVHSALRGHGDILQYLLTCEWSPGPPQPGTLRKSHALQQALTAAASMGHSSVVQCLLGMEKEHEVEVNGTDTLWGETALTAAAGRGKLEVCELLLGHGAAVSRTNRRGVPPLFCAARQGHWQIVRLLLERGCDVNLSDKQGRTPLMVAACEGHLSTVEFLLSKGAALSSLDKEGLSALSWACLKGHRAVVQYLVEEGAAIDQTDKNGRTPLDLAAFYGDAETVLYLVEKGAVIEHVDHSGMRPLDRAIGCRNTSVVVALLRKGAKLGNAAWAMATSKPDILIILLQKLMEEGNVMYKKGKMKEAAQRYQYALRKFPREGFGEDMRPFNELRVSLYLNLSRCRRKTNDFGMAEEFASKALELKPKSYEAFYARARAKRNSRQFVAALADLQEAVKLCPTNQEVKRLLARVEEECKQLQRSQQQKQQGPLPAPLNDSENEEDTPTPGLSDHFHSEETEEEETSPQEESVSPTPRSQPSSSVPSSYIRNLQEGLQSKGRPVSPQSRAGIGKSLREPVAQPGLLLQPSKQAQIVKTSQHLGSGQSAVRNGSMKVQISSQNPPPSPMPGRIAATPAGSRTQHLEGTGTFTTRAGCGHFGDRLGPSQNVRLQCGENGPAHPLPSKTKTTERLLSHSSVAVDAAPPNQGGLATCSDVRHPASLTSSGSSGSPSSSIKMSSSTSSLTSSSSFSDGFKVQGPDTRIKDKVVTHVQSGTAEHRPRNTPFMGIMDKTARFQQQSNPPSRSWHCPAPEGLLTNTSSAAGLQSANTEKPSLMQVGGYNNQAKTCSVSTLSASVHNGAQVKELEESKCQIPVHSQENRITKTVSHLYQESISKQQPHISNEAHRSHLTAAKPKRSFIESNV</sequence>
<keyword id="KW-0007">Acetylation</keyword>
<keyword id="KW-0025">Alternative splicing</keyword>
<keyword id="KW-0040">ANK repeat</keyword>
<keyword id="KW-0597">Phosphoprotein</keyword>
<keyword id="KW-1267">Proteomics identification</keyword>
<keyword id="KW-1185">Reference proteome</keyword>
<keyword id="KW-0677">Repeat</keyword>
<keyword id="KW-0770">Synapse</keyword>
<keyword id="KW-0802">TPR repeat</keyword>
<comment type="function">
    <text evidence="1">May be a scaffold component in the postsynaptic density.</text>
</comment>
<comment type="subunit">
    <text evidence="1">Interacts probably directly with DLG1, DLG4, HOMER1. Interacts with DLGAP1, INA, CAMK2A, GRIN2B and GRIA1 (By similarity). Interacts with TNIK. Interacts with MINK1 (By similarity).</text>
</comment>
<comment type="interaction">
    <interactant intactId="EBI-11023211">
        <id>Q9C0D5</id>
    </interactant>
    <interactant intactId="EBI-357481">
        <id>Q12959</id>
        <label>DLG1</label>
    </interactant>
    <organismsDiffer>false</organismsDiffer>
    <experiments>3</experiments>
</comment>
<comment type="interaction">
    <interactant intactId="EBI-11023211">
        <id>Q9C0D5</id>
    </interactant>
    <interactant intactId="EBI-357345">
        <id>Q14160</id>
        <label>SCRIB</label>
    </interactant>
    <organismsDiffer>false</organismsDiffer>
    <experiments>4</experiments>
</comment>
<comment type="subcellular location">
    <subcellularLocation>
        <location evidence="1">Postsynaptic density</location>
    </subcellularLocation>
</comment>
<comment type="alternative products">
    <event type="alternative splicing"/>
    <isoform>
        <id>Q9C0D5-1</id>
        <name>1</name>
        <sequence type="displayed"/>
    </isoform>
    <isoform>
        <id>Q9C0D5-2</id>
        <name>2</name>
        <sequence type="described" ref="VSP_030828"/>
    </isoform>
</comment>
<comment type="PTM">
    <text evidence="7">Phosphorylated; by MINK1 and TNIK upon stimulation by RAP2A.</text>
</comment>
<comment type="miscellaneous">
    <molecule>Isoform 2</molecule>
    <text evidence="9">Incomplete sequence.</text>
</comment>
<comment type="similarity">
    <text evidence="9">Belongs to the TANC family.</text>
</comment>
<comment type="sequence caution" evidence="9">
    <conflict type="erroneous initiation">
        <sequence resource="EMBL-CDS" id="AAH37329"/>
    </conflict>
    <text>Truncated N-terminus.</text>
</comment>
<comment type="sequence caution" evidence="9">
    <conflict type="miscellaneous discrepancy">
        <sequence resource="EMBL-CDS" id="AAH37329"/>
    </conflict>
    <text>The cDNA sequence appears to be not correctly spliced at its 3'-end.</text>
</comment>